<dbReference type="EC" id="2.7.11.24" evidence="2 4 11"/>
<dbReference type="EMBL" id="BX284604">
    <property type="protein sequence ID" value="CCD61386.1"/>
    <property type="molecule type" value="Genomic_DNA"/>
</dbReference>
<dbReference type="PIR" id="T29750">
    <property type="entry name" value="T29750"/>
</dbReference>
<dbReference type="RefSeq" id="NP_501365.1">
    <property type="nucleotide sequence ID" value="NM_068964.7"/>
</dbReference>
<dbReference type="SMR" id="Q17446"/>
<dbReference type="BioGRID" id="56238">
    <property type="interactions" value="33"/>
</dbReference>
<dbReference type="DIP" id="DIP-26892N"/>
<dbReference type="FunCoup" id="Q17446">
    <property type="interactions" value="1805"/>
</dbReference>
<dbReference type="IntAct" id="Q17446">
    <property type="interactions" value="17"/>
</dbReference>
<dbReference type="STRING" id="6239.B0218.3.1"/>
<dbReference type="iPTMnet" id="Q17446"/>
<dbReference type="PaxDb" id="6239-B0218.3"/>
<dbReference type="PeptideAtlas" id="Q17446"/>
<dbReference type="EnsemblMetazoa" id="B0218.3.1">
    <property type="protein sequence ID" value="B0218.3.1"/>
    <property type="gene ID" value="WBGene00004055"/>
</dbReference>
<dbReference type="GeneID" id="191743"/>
<dbReference type="KEGG" id="cel:CELE_B0218.3"/>
<dbReference type="UCSC" id="B0218.3">
    <property type="organism name" value="c. elegans"/>
</dbReference>
<dbReference type="AGR" id="WB:WBGene00004055"/>
<dbReference type="CTD" id="191743"/>
<dbReference type="WormBase" id="B0218.3">
    <property type="protein sequence ID" value="CE06686"/>
    <property type="gene ID" value="WBGene00004055"/>
    <property type="gene designation" value="pmk-1"/>
</dbReference>
<dbReference type="eggNOG" id="KOG0660">
    <property type="taxonomic scope" value="Eukaryota"/>
</dbReference>
<dbReference type="GeneTree" id="ENSGT00970000196450"/>
<dbReference type="HOGENOM" id="CLU_000288_181_1_1"/>
<dbReference type="InParanoid" id="Q17446"/>
<dbReference type="OMA" id="NRYTDLN"/>
<dbReference type="OrthoDB" id="192887at2759"/>
<dbReference type="PhylomeDB" id="Q17446"/>
<dbReference type="BRENDA" id="2.7.11.24">
    <property type="organism ID" value="1045"/>
</dbReference>
<dbReference type="Reactome" id="R-CEL-168638">
    <property type="pathway name" value="NOD1/2 Signaling Pathway"/>
</dbReference>
<dbReference type="Reactome" id="R-CEL-171007">
    <property type="pathway name" value="p38MAPK events"/>
</dbReference>
<dbReference type="Reactome" id="R-CEL-198753">
    <property type="pathway name" value="ERK/MAPK targets"/>
</dbReference>
<dbReference type="Reactome" id="R-CEL-2559580">
    <property type="pathway name" value="Oxidative Stress Induced Senescence"/>
</dbReference>
<dbReference type="Reactome" id="R-CEL-418592">
    <property type="pathway name" value="ADP signalling through P2Y purinoceptor 1"/>
</dbReference>
<dbReference type="Reactome" id="R-CEL-432142">
    <property type="pathway name" value="Platelet sensitization by LDL"/>
</dbReference>
<dbReference type="Reactome" id="R-CEL-4420097">
    <property type="pathway name" value="VEGFA-VEGFR2 Pathway"/>
</dbReference>
<dbReference type="Reactome" id="R-CEL-450302">
    <property type="pathway name" value="activated TAK1 mediates p38 MAPK activation"/>
</dbReference>
<dbReference type="Reactome" id="R-CEL-450341">
    <property type="pathway name" value="Activation of the AP-1 family of transcription factors"/>
</dbReference>
<dbReference type="Reactome" id="R-CEL-525793">
    <property type="pathway name" value="Myogenesis"/>
</dbReference>
<dbReference type="Reactome" id="R-CEL-5675221">
    <property type="pathway name" value="Negative regulation of MAPK pathway"/>
</dbReference>
<dbReference type="Reactome" id="R-CEL-6798695">
    <property type="pathway name" value="Neutrophil degranulation"/>
</dbReference>
<dbReference type="SignaLink" id="Q17446"/>
<dbReference type="PRO" id="PR:Q17446"/>
<dbReference type="Proteomes" id="UP000001940">
    <property type="component" value="Chromosome IV"/>
</dbReference>
<dbReference type="Bgee" id="WBGene00004055">
    <property type="expression patterns" value="Expressed in pharyngeal muscle cell (C elegans) and 4 other cell types or tissues"/>
</dbReference>
<dbReference type="GO" id="GO:0005737">
    <property type="term" value="C:cytoplasm"/>
    <property type="evidence" value="ECO:0000318"/>
    <property type="project" value="GO_Central"/>
</dbReference>
<dbReference type="GO" id="GO:0005829">
    <property type="term" value="C:cytosol"/>
    <property type="evidence" value="ECO:0000314"/>
    <property type="project" value="WormBase"/>
</dbReference>
<dbReference type="GO" id="GO:0005634">
    <property type="term" value="C:nucleus"/>
    <property type="evidence" value="ECO:0000314"/>
    <property type="project" value="UniProtKB"/>
</dbReference>
<dbReference type="GO" id="GO:0005524">
    <property type="term" value="F:ATP binding"/>
    <property type="evidence" value="ECO:0007669"/>
    <property type="project" value="UniProtKB-KW"/>
</dbReference>
<dbReference type="GO" id="GO:0004707">
    <property type="term" value="F:MAP kinase activity"/>
    <property type="evidence" value="ECO:0000314"/>
    <property type="project" value="UniProtKB"/>
</dbReference>
<dbReference type="GO" id="GO:0046872">
    <property type="term" value="F:metal ion binding"/>
    <property type="evidence" value="ECO:0007669"/>
    <property type="project" value="UniProtKB-KW"/>
</dbReference>
<dbReference type="GO" id="GO:0004672">
    <property type="term" value="F:protein kinase activity"/>
    <property type="evidence" value="ECO:0000314"/>
    <property type="project" value="WormBase"/>
</dbReference>
<dbReference type="GO" id="GO:0106310">
    <property type="term" value="F:protein serine kinase activity"/>
    <property type="evidence" value="ECO:0007669"/>
    <property type="project" value="RHEA"/>
</dbReference>
<dbReference type="GO" id="GO:0004674">
    <property type="term" value="F:protein serine/threonine kinase activity"/>
    <property type="evidence" value="ECO:0000314"/>
    <property type="project" value="WormBase"/>
</dbReference>
<dbReference type="GO" id="GO:0061629">
    <property type="term" value="F:RNA polymerase II-specific DNA-binding transcription factor binding"/>
    <property type="evidence" value="ECO:0000353"/>
    <property type="project" value="WormBase"/>
</dbReference>
<dbReference type="GO" id="GO:0140367">
    <property type="term" value="P:antibacterial innate immune response"/>
    <property type="evidence" value="ECO:0000315"/>
    <property type="project" value="WormBase"/>
</dbReference>
<dbReference type="GO" id="GO:0061760">
    <property type="term" value="P:antifungal innate immune response"/>
    <property type="evidence" value="ECO:0000315"/>
    <property type="project" value="WormBase"/>
</dbReference>
<dbReference type="GO" id="GO:0035095">
    <property type="term" value="P:behavioral response to nicotine"/>
    <property type="evidence" value="ECO:0000315"/>
    <property type="project" value="UniProtKB"/>
</dbReference>
<dbReference type="GO" id="GO:0071248">
    <property type="term" value="P:cellular response to metal ion"/>
    <property type="evidence" value="ECO:0000315"/>
    <property type="project" value="UniProtKB"/>
</dbReference>
<dbReference type="GO" id="GO:0050832">
    <property type="term" value="P:defense response to fungus"/>
    <property type="evidence" value="ECO:0000315"/>
    <property type="project" value="UniProtKB"/>
</dbReference>
<dbReference type="GO" id="GO:0050829">
    <property type="term" value="P:defense response to Gram-negative bacterium"/>
    <property type="evidence" value="ECO:0000315"/>
    <property type="project" value="UniProtKB"/>
</dbReference>
<dbReference type="GO" id="GO:0050830">
    <property type="term" value="P:defense response to Gram-positive bacterium"/>
    <property type="evidence" value="ECO:0000315"/>
    <property type="project" value="UniProtKB"/>
</dbReference>
<dbReference type="GO" id="GO:0006972">
    <property type="term" value="P:hyperosmotic response"/>
    <property type="evidence" value="ECO:0000316"/>
    <property type="project" value="WormBase"/>
</dbReference>
<dbReference type="GO" id="GO:0045087">
    <property type="term" value="P:innate immune response"/>
    <property type="evidence" value="ECO:0000315"/>
    <property type="project" value="WormBase"/>
</dbReference>
<dbReference type="GO" id="GO:0035556">
    <property type="term" value="P:intracellular signal transduction"/>
    <property type="evidence" value="ECO:0000314"/>
    <property type="project" value="UniProtKB"/>
</dbReference>
<dbReference type="GO" id="GO:0000165">
    <property type="term" value="P:MAPK cascade"/>
    <property type="evidence" value="ECO:0000316"/>
    <property type="project" value="WormBase"/>
</dbReference>
<dbReference type="GO" id="GO:1902236">
    <property type="term" value="P:negative regulation of endoplasmic reticulum stress-induced intrinsic apoptotic signaling pathway"/>
    <property type="evidence" value="ECO:0000315"/>
    <property type="project" value="ParkinsonsUK-UCL"/>
</dbReference>
<dbReference type="GO" id="GO:0038066">
    <property type="term" value="P:p38MAPK cascade"/>
    <property type="evidence" value="ECO:0000315"/>
    <property type="project" value="WormBase"/>
</dbReference>
<dbReference type="GO" id="GO:0018105">
    <property type="term" value="P:peptidyl-serine phosphorylation"/>
    <property type="evidence" value="ECO:0000314"/>
    <property type="project" value="CACAO"/>
</dbReference>
<dbReference type="GO" id="GO:1900426">
    <property type="term" value="P:positive regulation of defense response to bacterium"/>
    <property type="evidence" value="ECO:0000316"/>
    <property type="project" value="UniProtKB"/>
</dbReference>
<dbReference type="GO" id="GO:0010628">
    <property type="term" value="P:positive regulation of gene expression"/>
    <property type="evidence" value="ECO:0000315"/>
    <property type="project" value="UniProtKB"/>
</dbReference>
<dbReference type="GO" id="GO:1900182">
    <property type="term" value="P:positive regulation of protein localization to nucleus"/>
    <property type="evidence" value="ECO:0000315"/>
    <property type="project" value="WormBase"/>
</dbReference>
<dbReference type="GO" id="GO:0045944">
    <property type="term" value="P:positive regulation of transcription by RNA polymerase II"/>
    <property type="evidence" value="ECO:0000315"/>
    <property type="project" value="UniProtKB"/>
</dbReference>
<dbReference type="GO" id="GO:0012501">
    <property type="term" value="P:programmed cell death"/>
    <property type="evidence" value="ECO:0000315"/>
    <property type="project" value="WormBase"/>
</dbReference>
<dbReference type="GO" id="GO:0034976">
    <property type="term" value="P:response to endoplasmic reticulum stress"/>
    <property type="evidence" value="ECO:0000315"/>
    <property type="project" value="UniProtKB"/>
</dbReference>
<dbReference type="GO" id="GO:0009408">
    <property type="term" value="P:response to heat"/>
    <property type="evidence" value="ECO:0000315"/>
    <property type="project" value="UniProtKB"/>
</dbReference>
<dbReference type="GO" id="GO:0093002">
    <property type="term" value="P:response to nematicide"/>
    <property type="evidence" value="ECO:0000315"/>
    <property type="project" value="UniProtKB"/>
</dbReference>
<dbReference type="GO" id="GO:0006970">
    <property type="term" value="P:response to osmotic stress"/>
    <property type="evidence" value="ECO:0000314"/>
    <property type="project" value="UniProtKB"/>
</dbReference>
<dbReference type="GO" id="GO:0006979">
    <property type="term" value="P:response to oxidative stress"/>
    <property type="evidence" value="ECO:0000315"/>
    <property type="project" value="UniProtKB"/>
</dbReference>
<dbReference type="GO" id="GO:0000302">
    <property type="term" value="P:response to reactive oxygen species"/>
    <property type="evidence" value="ECO:0000270"/>
    <property type="project" value="WormBase"/>
</dbReference>
<dbReference type="GO" id="GO:0000303">
    <property type="term" value="P:response to superoxide"/>
    <property type="evidence" value="ECO:0000270"/>
    <property type="project" value="WormBase"/>
</dbReference>
<dbReference type="CDD" id="cd07851">
    <property type="entry name" value="STKc_p38"/>
    <property type="match status" value="1"/>
</dbReference>
<dbReference type="FunFam" id="1.10.510.10:FF:000063">
    <property type="entry name" value="Mitogen-activated protein kinase 14"/>
    <property type="match status" value="1"/>
</dbReference>
<dbReference type="FunFam" id="3.30.200.20:FF:000769">
    <property type="entry name" value="Mitogen-activated protein kinase 14"/>
    <property type="match status" value="1"/>
</dbReference>
<dbReference type="Gene3D" id="3.30.200.20">
    <property type="entry name" value="Phosphorylase Kinase, domain 1"/>
    <property type="match status" value="1"/>
</dbReference>
<dbReference type="Gene3D" id="1.10.510.10">
    <property type="entry name" value="Transferase(Phosphotransferase) domain 1"/>
    <property type="match status" value="1"/>
</dbReference>
<dbReference type="InterPro" id="IPR011009">
    <property type="entry name" value="Kinase-like_dom_sf"/>
</dbReference>
<dbReference type="InterPro" id="IPR050117">
    <property type="entry name" value="MAP_kinase"/>
</dbReference>
<dbReference type="InterPro" id="IPR003527">
    <property type="entry name" value="MAP_kinase_CS"/>
</dbReference>
<dbReference type="InterPro" id="IPR008352">
    <property type="entry name" value="MAPK_p38-like"/>
</dbReference>
<dbReference type="InterPro" id="IPR000719">
    <property type="entry name" value="Prot_kinase_dom"/>
</dbReference>
<dbReference type="InterPro" id="IPR017441">
    <property type="entry name" value="Protein_kinase_ATP_BS"/>
</dbReference>
<dbReference type="PANTHER" id="PTHR24055">
    <property type="entry name" value="MITOGEN-ACTIVATED PROTEIN KINASE"/>
    <property type="match status" value="1"/>
</dbReference>
<dbReference type="Pfam" id="PF00069">
    <property type="entry name" value="Pkinase"/>
    <property type="match status" value="1"/>
</dbReference>
<dbReference type="PRINTS" id="PR01773">
    <property type="entry name" value="P38MAPKINASE"/>
</dbReference>
<dbReference type="SMART" id="SM00220">
    <property type="entry name" value="S_TKc"/>
    <property type="match status" value="1"/>
</dbReference>
<dbReference type="SUPFAM" id="SSF56112">
    <property type="entry name" value="Protein kinase-like (PK-like)"/>
    <property type="match status" value="1"/>
</dbReference>
<dbReference type="PROSITE" id="PS01351">
    <property type="entry name" value="MAPK"/>
    <property type="match status" value="1"/>
</dbReference>
<dbReference type="PROSITE" id="PS00107">
    <property type="entry name" value="PROTEIN_KINASE_ATP"/>
    <property type="match status" value="1"/>
</dbReference>
<dbReference type="PROSITE" id="PS50011">
    <property type="entry name" value="PROTEIN_KINASE_DOM"/>
    <property type="match status" value="1"/>
</dbReference>
<evidence type="ECO:0000255" key="1">
    <source>
        <dbReference type="PROSITE-ProRule" id="PRU00159"/>
    </source>
</evidence>
<evidence type="ECO:0000269" key="2">
    <source>
    </source>
</evidence>
<evidence type="ECO:0000269" key="3">
    <source>
    </source>
</evidence>
<evidence type="ECO:0000269" key="4">
    <source>
    </source>
</evidence>
<evidence type="ECO:0000269" key="5">
    <source>
    </source>
</evidence>
<evidence type="ECO:0000269" key="6">
    <source>
    </source>
</evidence>
<evidence type="ECO:0000269" key="7">
    <source>
    </source>
</evidence>
<evidence type="ECO:0000269" key="8">
    <source>
    </source>
</evidence>
<evidence type="ECO:0000269" key="9">
    <source>
    </source>
</evidence>
<evidence type="ECO:0000269" key="10">
    <source>
    </source>
</evidence>
<evidence type="ECO:0000269" key="11">
    <source>
    </source>
</evidence>
<evidence type="ECO:0000269" key="12">
    <source>
    </source>
</evidence>
<evidence type="ECO:0000269" key="13">
    <source>
    </source>
</evidence>
<evidence type="ECO:0000269" key="14">
    <source>
    </source>
</evidence>
<evidence type="ECO:0000305" key="15"/>
<evidence type="ECO:0000312" key="16">
    <source>
        <dbReference type="WormBase" id="B0218.3"/>
    </source>
</evidence>
<comment type="function">
    <text evidence="2 3 4 5 6 7 8 9 10 11 12 13 14">Serine/threonine kinase which responds to activation by environmental stress and pro-inflammatory cytokines by phosphorylating downstream targets (PubMed:11703092, PubMed:12142542, PubMed:16166371, PubMed:18394898, PubMed:20369020, PubMed:22308034). As part of a MAP kinase signaling pathway, plays a role in modulation of lifespan and immunity (PubMed:12142542, PubMed:20369020, PubMed:22216003, PubMed:29748542). Phosphorylates skn-1 which probably regulates skn-1 nuclear translocation in response to oxidative stress (PubMed:16166371). Probably by activating skn-1, involved in the up-regulation of gcs-1 and glutathione-S-transferase gst-4 expression upon bacteria infection (PubMed:22216003). Up-regulates expression of gcs-1 in intestinal cells upon arsenite treatment (PubMed:16166371, PubMed:25204677). Functions downstream of the MAPKK sek-1 and the MAPKKK nsy-1 as the MAP kinase which regulates pathogen resistance and responses to oxidative stress (PubMed:11703092, PubMed:12142542, PubMed:16166371, PubMed:18394898). Required for expression of antimicrobial peptide nlp-29 in response to fungal infection or physical injury (PubMed:18394898). Involved in resistance to the nematotoxic C.cinerea galectin (Cgl2) (PubMed:20062796). May play a redundant role with other MAP kinases in susceptibility to anoxia, downstream of tir-1/nsy-1 (PubMed:21212236). Phosphorylates transcription factor rnt-1 during oxidative stress which results in rnt-1 stabilization in the intestine (PubMed:22308034). Phosphorylates transcription factor atf-7 during pathogen infection resulting in modulation of target genes (PubMed:19497412). Probably downstream of nsy-1 and sek-1, involved in germline apoptosis induced by heavy metals, such as Cu(2+) (PubMed:19497412). Regulates the basal expression of immune effector genes including irg-4, irg-5, mul-1 and drd-50 (PubMed:30668573).</text>
</comment>
<comment type="catalytic activity">
    <reaction evidence="2 4 11">
        <text>L-seryl-[protein] + ATP = O-phospho-L-seryl-[protein] + ADP + H(+)</text>
        <dbReference type="Rhea" id="RHEA:17989"/>
        <dbReference type="Rhea" id="RHEA-COMP:9863"/>
        <dbReference type="Rhea" id="RHEA-COMP:11604"/>
        <dbReference type="ChEBI" id="CHEBI:15378"/>
        <dbReference type="ChEBI" id="CHEBI:29999"/>
        <dbReference type="ChEBI" id="CHEBI:30616"/>
        <dbReference type="ChEBI" id="CHEBI:83421"/>
        <dbReference type="ChEBI" id="CHEBI:456216"/>
        <dbReference type="EC" id="2.7.11.24"/>
    </reaction>
</comment>
<comment type="catalytic activity">
    <reaction evidence="2 4 11">
        <text>L-threonyl-[protein] + ATP = O-phospho-L-threonyl-[protein] + ADP + H(+)</text>
        <dbReference type="Rhea" id="RHEA:46608"/>
        <dbReference type="Rhea" id="RHEA-COMP:11060"/>
        <dbReference type="Rhea" id="RHEA-COMP:11605"/>
        <dbReference type="ChEBI" id="CHEBI:15378"/>
        <dbReference type="ChEBI" id="CHEBI:30013"/>
        <dbReference type="ChEBI" id="CHEBI:30616"/>
        <dbReference type="ChEBI" id="CHEBI:61977"/>
        <dbReference type="ChEBI" id="CHEBI:456216"/>
        <dbReference type="EC" id="2.7.11.24"/>
    </reaction>
</comment>
<comment type="cofactor">
    <cofactor evidence="2 11">
        <name>Mg(2+)</name>
        <dbReference type="ChEBI" id="CHEBI:18420"/>
    </cofactor>
    <cofactor evidence="11">
        <name>Mn(2+)</name>
        <dbReference type="ChEBI" id="CHEBI:29035"/>
    </cofactor>
    <text evidence="11">Divalent cations such as magnesium or manganese.</text>
</comment>
<comment type="activity regulation">
    <text evidence="2">Activated by phosphorylation on threonine and tyrosine. Inhibited by pyridinyl-imidazole related compounds.</text>
</comment>
<comment type="subunit">
    <text evidence="8">Interacts with transcription factor atf-7; perhaps in a manner dependent on dual specificity protein kinase sek-1.</text>
</comment>
<comment type="subcellular location">
    <subcellularLocation>
        <location evidence="8">Nucleus</location>
    </subcellularLocation>
    <text evidence="8">Accumulates in nucleus in response to heavy metals, such as cadmium.</text>
</comment>
<comment type="tissue specificity">
    <text evidence="8">Expressed in intestinal cells.</text>
</comment>
<comment type="domain">
    <text evidence="2">The TXY motif contains the threonine and tyrosine residues whose phosphorylation activates the MAP kinases.</text>
</comment>
<comment type="PTM">
    <text evidence="4 9 12 13">Dually phosphorylated on Thr-191 and Tyr-193, probably by sek-1, which activates the enzyme (PubMed:16166371, PubMed:21212236). Increased phosphorylation in response to the heavy metal arsenite (PubMed:25204677). Increased phosphorylation in response to intestinal colonization by probiotic Lactobacillus fermentum strain JDFM216 (PubMed:29748542).</text>
</comment>
<comment type="disruption phenotype">
    <text evidence="3 7 10 11 13 14">Knockout causes reduction in adult lifespan (PubMed:29748542). Upon infection by P.aeruginosa or E.faecalis, RNAi-mediated knockdown results in a decrease in survival rate and in a reduced up-regulation of gst-4 and gcs-1 expression (PubMed:12142542, PubMed:22216003). Causes a severe reduction in rnt-1 accumulation in the intestine during oxidative stress mediated by paraquat (PubMed:22308034). Upon exposure to C.cinerea galectin Cgl2, adults show reduced survival and larvae do not develop (PubMed:20062796). Larval development is partially restored in a bre-1, fut-8, gly-13, galt-1 or ger-1 mutant background (PubMed:20062796). Reduces the basal expression of innate immune response genes including irg-4, irg-5, mul-1 and drd-50 (PubMed:30668573). Exhibits increased susceptibility to P.aeruginosa infection, independent of the presence of the xenobiotic immunostimulant R24 (PubMed:30668573).</text>
</comment>
<comment type="similarity">
    <text evidence="15">Belongs to the protein kinase superfamily. CMGC Ser/Thr protein kinase family. MAP kinase subfamily.</text>
</comment>
<accession>Q17446</accession>
<gene>
    <name evidence="16" type="primary">pmk-1</name>
    <name evidence="16" type="ORF">B0218.3</name>
</gene>
<keyword id="KW-0067">ATP-binding</keyword>
<keyword id="KW-0418">Kinase</keyword>
<keyword id="KW-0460">Magnesium</keyword>
<keyword id="KW-0464">Manganese</keyword>
<keyword id="KW-0479">Metal-binding</keyword>
<keyword id="KW-0547">Nucleotide-binding</keyword>
<keyword id="KW-0539">Nucleus</keyword>
<keyword id="KW-0597">Phosphoprotein</keyword>
<keyword id="KW-1185">Reference proteome</keyword>
<keyword id="KW-0723">Serine/threonine-protein kinase</keyword>
<keyword id="KW-0346">Stress response</keyword>
<keyword id="KW-0808">Transferase</keyword>
<feature type="chain" id="PRO_0000186303" description="Mitogen-activated protein kinase pmk-1">
    <location>
        <begin position="1"/>
        <end position="377"/>
    </location>
</feature>
<feature type="domain" description="Protein kinase" evidence="1">
    <location>
        <begin position="35"/>
        <end position="319"/>
    </location>
</feature>
<feature type="short sequence motif" description="TXY">
    <location>
        <begin position="191"/>
        <end position="193"/>
    </location>
</feature>
<feature type="active site" description="Proton acceptor" evidence="1">
    <location>
        <position position="179"/>
    </location>
</feature>
<feature type="binding site" evidence="1">
    <location>
        <begin position="41"/>
        <end position="49"/>
    </location>
    <ligand>
        <name>ATP</name>
        <dbReference type="ChEBI" id="CHEBI:30616"/>
    </ligand>
</feature>
<feature type="binding site" evidence="1">
    <location>
        <position position="64"/>
    </location>
    <ligand>
        <name>ATP</name>
        <dbReference type="ChEBI" id="CHEBI:30616"/>
    </ligand>
</feature>
<feature type="modified residue" description="Phosphothreonine" evidence="4 9">
    <location>
        <position position="191"/>
    </location>
</feature>
<feature type="modified residue" description="Phosphotyrosine" evidence="4 9">
    <location>
        <position position="193"/>
    </location>
</feature>
<feature type="mutagenesis site" description="Loss of kinase activity." evidence="4">
    <original>K</original>
    <variation>R</variation>
    <location>
        <position position="64"/>
    </location>
</feature>
<protein>
    <recommendedName>
        <fullName>Mitogen-activated protein kinase pmk-1</fullName>
        <ecNumber evidence="2 4 11">2.7.11.24</ecNumber>
    </recommendedName>
    <alternativeName>
        <fullName>Stress-activated protein kinase pmk-1</fullName>
    </alternativeName>
    <alternativeName>
        <fullName>p38 MAP kinase 1</fullName>
    </alternativeName>
</protein>
<sequence length="377" mass="43919">MFPQTTMDHILHPTPREGYYVVELNRSVWVVPNYYINLTPIGTGAYGTVCAAECTRSGTRVAIKKFNRPFQSIIHARRTYRELRLLRCMCHENIIDLLDVFTPNENVNDIEDVYFVSMLMGADLSNILKIQRLNDDHIQFLVYQILRGLKYIHSADIIHRDLKPSNIAVNEDCELKILDFGLARQTDSEMTGYVATRWYRAPEIMLNWMHYTQTVDVWSVGCILAELITGKTLFPGSDHIDQLTRIMSVTGTPDEEFLKKISSEEARNYIRNLPKMTRRDFKRLFAQATPQAIDLLEKMLHLDPDRRPTAKEAMEHEYLAAYHDETDEPIAEEMDLNDDVRADTIDEWKKIIWEEISDFQKNVAFADEEEDEEKMES</sequence>
<name>PMK1_CAEEL</name>
<proteinExistence type="evidence at protein level"/>
<reference key="1">
    <citation type="journal article" date="2001" name="Mol. Cell Biol. Res. Commun.">
        <title>Isolation and characterization of pmk-(1-3): three p38 homologs in Caenorhabditis elegans.</title>
        <authorList>
            <person name="Berman K."/>
            <person name="McKay J."/>
            <person name="Avery L."/>
            <person name="Cobb M."/>
        </authorList>
    </citation>
    <scope>NUCLEOTIDE SEQUENCE [GENOMIC DNA]</scope>
    <scope>FUNCTION</scope>
    <scope>CATALYTIC ACTIVITY</scope>
    <scope>COFACTOR</scope>
    <scope>ACTIVITY REGULATION</scope>
    <scope>DOMAIN</scope>
    <source>
        <strain>Bristol N2</strain>
    </source>
</reference>
<reference key="2">
    <citation type="journal article" date="1998" name="Science">
        <title>Genome sequence of the nematode C. elegans: a platform for investigating biology.</title>
        <authorList>
            <consortium name="The C. elegans sequencing consortium"/>
        </authorList>
    </citation>
    <scope>NUCLEOTIDE SEQUENCE [LARGE SCALE GENOMIC DNA]</scope>
    <source>
        <strain>Bristol N2</strain>
    </source>
</reference>
<reference key="3">
    <citation type="journal article" date="2002" name="Science">
        <title>A conserved p38 MAP kinase pathway in Caenorhabditis elegans innate immunity.</title>
        <authorList>
            <person name="Kim D.H."/>
            <person name="Feinbaum R."/>
            <person name="Alloing G."/>
            <person name="Emerson F.E."/>
            <person name="Garsin D.A."/>
            <person name="Inoue H."/>
            <person name="Tanaka-Hino M."/>
            <person name="Hisamoto N."/>
            <person name="Matsumoto K."/>
            <person name="Tan M.-W."/>
            <person name="Ausubel F.M."/>
        </authorList>
    </citation>
    <scope>FUNCTION</scope>
    <scope>PHOSPHORYLATION AT THR-191 AND TYR-193</scope>
    <scope>DISRUPTION PHENOTYPE</scope>
    <source>
        <strain>Bristol N2</strain>
    </source>
</reference>
<reference key="4">
    <citation type="journal article" date="2005" name="Genes Dev.">
        <title>The C. elegans p38 MAPK pathway regulates nuclear localization of the transcription factor SKN-1 in oxidative stress response.</title>
        <authorList>
            <person name="Inoue H."/>
            <person name="Hisamoto N."/>
            <person name="An J.H."/>
            <person name="Oliveira R.P."/>
            <person name="Nishida E."/>
            <person name="Blackwell T.K."/>
            <person name="Matsumoto K."/>
        </authorList>
    </citation>
    <scope>FUNCTION</scope>
    <scope>CATALYTIC ACTIVITY</scope>
    <scope>PHOSPHORYLATION AT THR-191 AND TYR-193</scope>
    <scope>MUTAGENESIS OF LYS-64</scope>
</reference>
<reference key="5">
    <citation type="journal article" date="2008" name="Curr. Biol.">
        <title>Distinct innate immune responses to infection and wounding in the C. elegans epidermis.</title>
        <authorList>
            <person name="Pujol N."/>
            <person name="Cypowyj S."/>
            <person name="Ziegler K."/>
            <person name="Millet A."/>
            <person name="Astrain A."/>
            <person name="Goncharov A."/>
            <person name="Jin Y."/>
            <person name="Chisholm A.D."/>
            <person name="Ewbank J.J."/>
        </authorList>
    </citation>
    <scope>FUNCTION</scope>
</reference>
<reference key="6">
    <citation type="journal article" date="2009" name="Chem. Biol. Interact.">
        <title>Copper-induced germline apoptosis in Caenorhabditis elegans: the independent roles of DNA damage response signaling and the dependent roles of MAPK cascades.</title>
        <authorList>
            <person name="Wang S."/>
            <person name="Wu L."/>
            <person name="Wang Y."/>
            <person name="Luo X."/>
            <person name="Lu Y."/>
        </authorList>
    </citation>
    <scope>FUNCTION</scope>
</reference>
<reference evidence="15" key="7">
    <citation type="journal article" date="2010" name="PLoS Genet.">
        <title>Phosphorylation of the conserved transcription factor ATF-7 by PMK-1 p38 MAPK regulates innate immunity in Caenorhabditis elegans.</title>
        <authorList>
            <person name="Shivers R.P."/>
            <person name="Pagano D.J."/>
            <person name="Kooistra T."/>
            <person name="Richardson C.E."/>
            <person name="Reddy K.C."/>
            <person name="Whitney J.K."/>
            <person name="Kamanzi O."/>
            <person name="Matsumoto K."/>
            <person name="Hisamoto N."/>
            <person name="Kim D.H."/>
        </authorList>
    </citation>
    <scope>FUNCTION</scope>
    <scope>INTERACTION WITH ATF-7</scope>
</reference>
<reference key="8">
    <citation type="journal article" date="2010" name="PLoS Pathog.">
        <title>Caenorhabditis elegans N-glycan core beta-galactoside confers sensitivity towards nematotoxic fungal galectin CGL2.</title>
        <authorList>
            <person name="Butschi A."/>
            <person name="Titz A."/>
            <person name="Waelti M.A."/>
            <person name="Olieric V."/>
            <person name="Paschinger K."/>
            <person name="Noebauer K."/>
            <person name="Guo X."/>
            <person name="Seeberger P.H."/>
            <person name="Wilson I.B."/>
            <person name="Aebi M."/>
            <person name="Hengartner M.O."/>
            <person name="Kuenzler M."/>
        </authorList>
    </citation>
    <scope>FUNCTION</scope>
    <scope>DISRUPTION PHENOTYPE</scope>
</reference>
<reference key="9">
    <citation type="journal article" date="2011" name="Genetics">
        <title>Regulation of anoxic death in Caenorhabditis elegans by mammalian apoptosis signal-regulating kinase (ASK) family proteins.</title>
        <authorList>
            <person name="Hayakawa T."/>
            <person name="Kato K."/>
            <person name="Hayakawa R."/>
            <person name="Hisamoto N."/>
            <person name="Matsumoto K."/>
            <person name="Takeda K."/>
            <person name="Ichijo H."/>
        </authorList>
    </citation>
    <scope>FUNCTION</scope>
    <scope>PHOSPHORYLATION AT THR-191 AND TYR-193</scope>
</reference>
<reference key="10">
    <citation type="journal article" date="2011" name="PLoS Pathog.">
        <title>Ce-Duox1/BLI-3 generated reactive oxygen species trigger protective SKN-1 activity via p38 MAPK signaling during infection in C. elegans.</title>
        <authorList>
            <person name="Hoeven R.V."/>
            <person name="McCallum K.C."/>
            <person name="Cruz M.R."/>
            <person name="Garsin D.A."/>
        </authorList>
    </citation>
    <scope>FUNCTION</scope>
    <scope>DISRUPTION PHENOTYPE</scope>
</reference>
<reference key="11">
    <citation type="journal article" date="2012" name="J. Biol. Chem.">
        <title>Stabilization of RNT-1 protein, runt-related transcription factor (RUNX) protein homolog of Caenorhabditis elegans, by oxidative stress through mitogen-activated protein kinase pathway.</title>
        <authorList>
            <person name="Lee K."/>
            <person name="Shim J."/>
            <person name="Bae J."/>
            <person name="Kim Y.J."/>
            <person name="Lee J."/>
        </authorList>
    </citation>
    <scope>FUNCTION</scope>
    <scope>CATALYTIC ACTIVITY</scope>
    <scope>COFACTOR</scope>
    <scope>DISRUPTION PHENOTYPE</scope>
</reference>
<reference key="12">
    <citation type="journal article" date="2014" name="BMC Biol.">
        <title>Genome-wide screening identifies new genes required for stress-induced phase 2 detoxification gene expression in animals.</title>
        <authorList>
            <person name="Crook-McMahon H.M."/>
            <person name="Olahova M."/>
            <person name="Button E.L."/>
            <person name="Winter J.J."/>
            <person name="Veal E.A."/>
        </authorList>
    </citation>
    <scope>FUNCTION</scope>
    <scope>PHOSPHORYLATION</scope>
</reference>
<reference key="13">
    <citation type="journal article" date="2018" name="Sci. Rep.">
        <title>Probiotic Lactobacillus fermentum strain JDFM216 stimulates the longevity and immune response of Caenorhabditis elegans through a nuclear hormone receptor.</title>
        <authorList>
            <person name="Park M.R."/>
            <person name="Ryu S."/>
            <person name="Maburutse B.E."/>
            <person name="Oh N.S."/>
            <person name="Kim S.H."/>
            <person name="Oh S."/>
            <person name="Jeong S.Y."/>
            <person name="Jeong D.Y."/>
            <person name="Oh S."/>
            <person name="Kim Y."/>
        </authorList>
    </citation>
    <scope>FUNCTION</scope>
    <scope>DISRUPTION PHENOTYPE</scope>
    <scope>PHOSPHORYLATION</scope>
</reference>
<reference evidence="15" key="14">
    <citation type="journal article" date="2019" name="PLoS Genet.">
        <title>The nuclear hormone receptor NHR-86 controls anti-pathogen responses in C. elegans.</title>
        <authorList>
            <person name="Peterson N.D."/>
            <person name="Cheesman H.K."/>
            <person name="Liu P."/>
            <person name="Anderson S.M."/>
            <person name="Foster K.J."/>
            <person name="Chhaya R."/>
            <person name="Perrat P."/>
            <person name="Thekkiniath J."/>
            <person name="Yang Q."/>
            <person name="Haynes C.M."/>
            <person name="Pukkila-Worley R."/>
        </authorList>
    </citation>
    <scope>FUNCTION</scope>
    <scope>DISRUPTION PHENOTYPE</scope>
</reference>
<organism>
    <name type="scientific">Caenorhabditis elegans</name>
    <dbReference type="NCBI Taxonomy" id="6239"/>
    <lineage>
        <taxon>Eukaryota</taxon>
        <taxon>Metazoa</taxon>
        <taxon>Ecdysozoa</taxon>
        <taxon>Nematoda</taxon>
        <taxon>Chromadorea</taxon>
        <taxon>Rhabditida</taxon>
        <taxon>Rhabditina</taxon>
        <taxon>Rhabditomorpha</taxon>
        <taxon>Rhabditoidea</taxon>
        <taxon>Rhabditidae</taxon>
        <taxon>Peloderinae</taxon>
        <taxon>Caenorhabditis</taxon>
    </lineage>
</organism>